<protein>
    <recommendedName>
        <fullName evidence="1">Protein TIC 214</fullName>
    </recommendedName>
    <alternativeName>
        <fullName evidence="1">Translocon at the inner envelope membrane of chloroplasts 214</fullName>
        <shortName evidence="1">AtTIC214</shortName>
    </alternativeName>
</protein>
<proteinExistence type="inferred from homology"/>
<sequence>MMVFQSFILGNLVSLCMKIINSVVVVGLYYGFLTTFSIGPSYLFLLRARVMDEGEEGTEKKVSATTGFIAGQLMMFISIYYAPLHLALGRPHTITVLALPYLLFHFFWNNHKHFFDYGSTTRNEMRNLRIQCVFLNNLIFQLFNHFILPSSMLARLVNIYMFRCNNKMLFVTSSFVGWLIGHILFMKWVGLVLVWIQQNNSIRSNVLIRSNKYKFLVSELRNSMARIFSILLFITCVYYLGRIPSPIFTKKLKGTSETGGTKQDQEVSTAEAPFPSLFSEEGEDLDKIDEMEEIRVNEKDKINKDDEFHVRTYYKTVSENLDGNKENSNLEFFKIKKKEDHFLWFEKPFVTLVFDYKRWNRPNRYIKNDKIENTVRNEMAQYFFYTCQSDGKERIAFTYPPNLSTFFEMIQKRIPSFTREKITSDQVSTYWSLIHEEKKENLKKEFLNRIEALDKGGSVENILEKTTRFCYNEAKKEYLPKIYDPFLHGISRGRIKKLPPFKIITETYRKNNIRGSWINKIHGLLLKLNYHKFEQTIENFNRKSLSIEKKLSFFSEPQQEEKFNSEEEIKIFKFLFDIVRTDSNDQTLIKNFIDFHEINKKVPRWSYKLISELEELEGENEENVPMEPGIRSRKAKRVVVFTDKEPHDEIYTNLKENQNSDQKDEMALIRYSQQSDFRREIIKGSMRSQRRKPVIWEFFQAKVHSPLFFDRIDKLFFFSFDIWGLKKKILKNFISQTKKKNFDKKEEEQSKIEEKRRIEIAETWDSFLFAQIIRGSLLVTQSILRKYIILPLLILIKNSVRMLLFQFPEWSEDLKDWKREMHVKCTYNGVQLSETEFPRNWLTDGIQIKILFPFYLKPWHKSKFQASQKARLKKTKDKGEKNDFCFLTVWGMETELPFGSAQRKPSFFEPISKELKKRIKKLKTKSLVVLRIFKERATIFLKVANEIKNWILKNFIFIKGKIKDLSKRNPISLFGPREIYELNETKKDSIIRNQIIHELSVQNKSMEWTNSSLSENKITNLIDRIKTIRNQIEEISKEKQNLTNNCTKLRYDSKKIESSKKIWQAFKRKNTRLIRKSIFFFKFCIEQLSIAIFLGIINIPKITTQLFFESIKTILDKSIYKNEEKGEKKKNPFYFISTIKNLISNKKKMSYDLCSLSQAYVFYKLSQIKVSNVSKLKDVLEYNICITSFFVKNKIKSFFQEQGIFHYELKNKTFLNSEVNQWKNWLRSHYQYNLPQIAWARLVTQNWKKKINKDSLVLNPSLTKEDSYEKKKFDNYKKQNFFEADSVLNPKHNFKKDYIYNLFCYKSIHPTENFFDMYVGIALDNCLVSSCLEKYNIRGMREIWHRKYVDWRILNFWFTKKVNIEPWVNTKSKKKYINTKVQNYQRIDKITKTDLANQKSFFFDWMGMNEEILNHRITNFEFFFFPEFFLFSSTYKIKPWVIPIKLLLLNFNENINVNKKLTRKKKGFIPSNEKKSLRFYNLNKEEKESAGQFELESDKEKKRNPESALLNQEKNIEENFAESMIKKRQNKKQYKSNTEAELDLFLTRYSRFQLRWNCFFNQKILNNVKVYCLLVRLNNPNEIAISSIERGEMSLDILMIEKNFTFAKLMKKGILIIEPVRLSVQNDGQLIIYRTIGIPLVHKNKHKISKRSKKKSYIDKKIFEKSKTKYQNKTVNRKKKHYDFFVPENILSPKRRREFRILICFNLKKKTARDRNSRFDKNIQNLTTVLHKKKDLNKEKNNLINLKSFLWPKFRLEDLACMNRYWFNTTNGTNFSMIRIRMYTRFPIH</sequence>
<organism>
    <name type="scientific">Capsella bursa-pastoris</name>
    <name type="common">Shepherd's purse</name>
    <name type="synonym">Thlaspi bursa-pastoris</name>
    <dbReference type="NCBI Taxonomy" id="3719"/>
    <lineage>
        <taxon>Eukaryota</taxon>
        <taxon>Viridiplantae</taxon>
        <taxon>Streptophyta</taxon>
        <taxon>Embryophyta</taxon>
        <taxon>Tracheophyta</taxon>
        <taxon>Spermatophyta</taxon>
        <taxon>Magnoliopsida</taxon>
        <taxon>eudicotyledons</taxon>
        <taxon>Gunneridae</taxon>
        <taxon>Pentapetalae</taxon>
        <taxon>rosids</taxon>
        <taxon>malvids</taxon>
        <taxon>Brassicales</taxon>
        <taxon>Brassicaceae</taxon>
        <taxon>Camelineae</taxon>
        <taxon>Capsella</taxon>
    </lineage>
</organism>
<comment type="function">
    <text evidence="1">Involved in protein precursor import into chloroplasts. May be part of an intermediate translocation complex acting as a protein-conducting channel at the inner envelope.</text>
</comment>
<comment type="subunit">
    <text evidence="1">Part of the Tic complex.</text>
</comment>
<comment type="subcellular location">
    <subcellularLocation>
        <location evidence="1">Plastid</location>
        <location evidence="1">Chloroplast inner membrane</location>
        <topology evidence="2">Multi-pass membrane protein</topology>
    </subcellularLocation>
</comment>
<comment type="miscellaneous">
    <text>There is a partial copy of the N-terminus (positions 1-341) of ycf1 in the inverted repeat (BAF50246).</text>
</comment>
<comment type="similarity">
    <text evidence="3">Belongs to the TIC214 family.</text>
</comment>
<name>TI214_CAPBU</name>
<dbReference type="EMBL" id="AP009371">
    <property type="protein sequence ID" value="BAF50258.1"/>
    <property type="molecule type" value="Genomic_DNA"/>
</dbReference>
<dbReference type="EMBL" id="AP009371">
    <property type="protein sequence ID" value="BAF50246.1"/>
    <property type="molecule type" value="Genomic_DNA"/>
</dbReference>
<dbReference type="GO" id="GO:0009706">
    <property type="term" value="C:chloroplast inner membrane"/>
    <property type="evidence" value="ECO:0007669"/>
    <property type="project" value="UniProtKB-SubCell"/>
</dbReference>
<dbReference type="GO" id="GO:0015031">
    <property type="term" value="P:protein transport"/>
    <property type="evidence" value="ECO:0007669"/>
    <property type="project" value="UniProtKB-KW"/>
</dbReference>
<dbReference type="InterPro" id="IPR008896">
    <property type="entry name" value="TIC214"/>
</dbReference>
<dbReference type="PANTHER" id="PTHR33163:SF40">
    <property type="entry name" value="PROTEIN TIC 214"/>
    <property type="match status" value="1"/>
</dbReference>
<dbReference type="PANTHER" id="PTHR33163">
    <property type="entry name" value="PROTEIN TIC 214-RELATED"/>
    <property type="match status" value="1"/>
</dbReference>
<dbReference type="Pfam" id="PF05758">
    <property type="entry name" value="Ycf1"/>
    <property type="match status" value="1"/>
</dbReference>
<feature type="chain" id="PRO_0000326564" description="Protein TIC 214">
    <location>
        <begin position="1"/>
        <end position="1789"/>
    </location>
</feature>
<feature type="transmembrane region" description="Helical" evidence="2">
    <location>
        <begin position="19"/>
        <end position="39"/>
    </location>
</feature>
<feature type="transmembrane region" description="Helical" evidence="2">
    <location>
        <begin position="68"/>
        <end position="88"/>
    </location>
</feature>
<feature type="transmembrane region" description="Helical" evidence="2">
    <location>
        <begin position="91"/>
        <end position="111"/>
    </location>
</feature>
<feature type="transmembrane region" description="Helical" evidence="2">
    <location>
        <begin position="133"/>
        <end position="153"/>
    </location>
</feature>
<feature type="transmembrane region" description="Helical" evidence="2">
    <location>
        <begin position="176"/>
        <end position="196"/>
    </location>
</feature>
<feature type="transmembrane region" description="Helical" evidence="2">
    <location>
        <begin position="227"/>
        <end position="247"/>
    </location>
</feature>
<feature type="sequence conflict" description="In Ref. 1; BAF50246." evidence="3" ref="1">
    <original>H</original>
    <variation>Q</variation>
    <location>
        <position position="341"/>
    </location>
</feature>
<evidence type="ECO:0000250" key="1">
    <source>
        <dbReference type="UniProtKB" id="P56785"/>
    </source>
</evidence>
<evidence type="ECO:0000255" key="2"/>
<evidence type="ECO:0000305" key="3"/>
<reference key="1">
    <citation type="submission" date="2007-03" db="EMBL/GenBank/DDBJ databases">
        <title>Sequencing analysis of Capsella bursa-pastoris JO22 chloroplast DNA.</title>
        <authorList>
            <person name="Hosouchi T."/>
            <person name="Tsuruoka H."/>
            <person name="Kotani H."/>
        </authorList>
    </citation>
    <scope>NUCLEOTIDE SEQUENCE [LARGE SCALE GENOMIC DNA]</scope>
</reference>
<geneLocation type="chloroplast"/>
<keyword id="KW-0150">Chloroplast</keyword>
<keyword id="KW-0472">Membrane</keyword>
<keyword id="KW-0934">Plastid</keyword>
<keyword id="KW-1001">Plastid inner membrane</keyword>
<keyword id="KW-0653">Protein transport</keyword>
<keyword id="KW-0812">Transmembrane</keyword>
<keyword id="KW-1133">Transmembrane helix</keyword>
<keyword id="KW-0813">Transport</keyword>
<gene>
    <name evidence="1" type="primary">TIC214</name>
    <name type="synonym">ycf1-A</name>
</gene>
<gene>
    <name evidence="1" type="primary">TIC214</name>
    <name type="synonym">ycf1-B</name>
</gene>
<accession>A4QKQ3</accession>
<accession>A4QKP1</accession>